<sequence length="743" mass="84679">MDQKLSELVEVLTTSGEPQLNPEKLKELKKICRSSDEHINHVYHLLMTQLNQEHAEIRLSAFQIVTELFARSHLFRTLLISNFQEFLELTVETDHEQPLPPPKEVAQKMKILAIKTVQEWHEKFGEAYKKLSLGYHFLKQNKKIDFQDVRSRTQAERKREEEKQRRLENIYKEKVKKATAEMEDMLEEIQSSLTEMENCFRLLLPDPREFAVFTDEKDFASDMRTKPTSQSPSHSKSTSQSSAYSKSTSQVSFDNDDEQPCCSKNLPPFPSSCTSSASGAERSLGEGAKESDKSARKSDTDDSDGDYEGSREAFLRDHGLGSHAYSLSLEISTDLKVNENENNTDVLNNLMDAHKLLKQKYWPAVQSWIQLFTKAGTNSESLKCAIDVKKEIEAALKKYKEMNIDCHTKERKVMTASDDDDDDDEFEEVPEKEGYEPHIPDHLREEYGLEPSASKQPGKKTEVKRPNVPQVPPSQKRINDELNPTCAAATMKTMKDKMAKALPGSSRNAGEPKSKCPKRETDLSQAPVAPCGLDLHHWGEEQPSAGKMLKFSSLHRFWAPNEVDEEVESKELEALVKTRYVTLPGKFEPVKHKCLAPMPNGSLCERQDRYKCPFHGKIVPRDAIGVPINAEDRAREAREKFEKQGEEQDWRDPELMREIEQATGVDLGSSKCPVKGKGKGVKRNLKKKYPNLTDLKQKANTSRSRLEKKVFNTGSVKRVISAMNQADKRRHEKFANQFNYALN</sequence>
<keyword id="KW-0158">Chromosome</keyword>
<keyword id="KW-0175">Coiled coil</keyword>
<keyword id="KW-0227">DNA damage</keyword>
<keyword id="KW-0234">DNA repair</keyword>
<keyword id="KW-1017">Isopeptide bond</keyword>
<keyword id="KW-0479">Metal-binding</keyword>
<keyword id="KW-1185">Reference proteome</keyword>
<keyword id="KW-0832">Ubl conjugation</keyword>
<keyword id="KW-0862">Zinc</keyword>
<keyword id="KW-0863">Zinc-finger</keyword>
<dbReference type="EMBL" id="AAMC01122916">
    <property type="status" value="NOT_ANNOTATED_CDS"/>
    <property type="molecule type" value="Genomic_DNA"/>
</dbReference>
<dbReference type="EMBL" id="AAMC01122917">
    <property type="status" value="NOT_ANNOTATED_CDS"/>
    <property type="molecule type" value="Genomic_DNA"/>
</dbReference>
<dbReference type="EMBL" id="BC155701">
    <property type="protein sequence ID" value="AAI55702.1"/>
    <property type="molecule type" value="mRNA"/>
</dbReference>
<dbReference type="RefSeq" id="NP_001107306.1">
    <property type="nucleotide sequence ID" value="NM_001113834.1"/>
</dbReference>
<dbReference type="RefSeq" id="XP_012808522.2">
    <property type="nucleotide sequence ID" value="XM_012953068.3"/>
</dbReference>
<dbReference type="RefSeq" id="XP_012808563.2">
    <property type="nucleotide sequence ID" value="XM_012953109.3"/>
</dbReference>
<dbReference type="RefSeq" id="XP_012808597.2">
    <property type="nucleotide sequence ID" value="XM_012953143.3"/>
</dbReference>
<dbReference type="SMR" id="F7AEX0"/>
<dbReference type="FunCoup" id="F7AEX0">
    <property type="interactions" value="1917"/>
</dbReference>
<dbReference type="STRING" id="8364.ENSXETP00000049804"/>
<dbReference type="PaxDb" id="8364-ENSXETP00000023371"/>
<dbReference type="GeneID" id="100135095"/>
<dbReference type="KEGG" id="xtr:100135095"/>
<dbReference type="AGR" id="Xenbase:XB-GENE-5833232"/>
<dbReference type="CTD" id="57654"/>
<dbReference type="Xenbase" id="XB-GENE-5833232">
    <property type="gene designation" value="uvssa"/>
</dbReference>
<dbReference type="eggNOG" id="KOG2374">
    <property type="taxonomic scope" value="Eukaryota"/>
</dbReference>
<dbReference type="HOGENOM" id="CLU_023577_0_0_1"/>
<dbReference type="InParanoid" id="F7AEX0"/>
<dbReference type="OrthoDB" id="5594015at2759"/>
<dbReference type="TreeFam" id="TF321660"/>
<dbReference type="Reactome" id="R-XTR-6781823">
    <property type="pathway name" value="Formation of TC-NER Pre-Incision Complex"/>
</dbReference>
<dbReference type="Reactome" id="R-XTR-6782135">
    <property type="pathway name" value="Dual incision in TC-NER"/>
</dbReference>
<dbReference type="Reactome" id="R-XTR-6782210">
    <property type="pathway name" value="Gap-filling DNA repair synthesis and ligation in TC-NER"/>
</dbReference>
<dbReference type="Proteomes" id="UP000008143">
    <property type="component" value="Chromosome 1"/>
</dbReference>
<dbReference type="Bgee" id="ENSXETG00000010677">
    <property type="expression patterns" value="Expressed in 2-cell stage embryo and 12 other cell types or tissues"/>
</dbReference>
<dbReference type="GO" id="GO:0005694">
    <property type="term" value="C:chromosome"/>
    <property type="evidence" value="ECO:0000250"/>
    <property type="project" value="UniProtKB"/>
</dbReference>
<dbReference type="GO" id="GO:0005634">
    <property type="term" value="C:nucleus"/>
    <property type="evidence" value="ECO:0000250"/>
    <property type="project" value="UniProtKB"/>
</dbReference>
<dbReference type="GO" id="GO:0090734">
    <property type="term" value="C:site of DNA damage"/>
    <property type="evidence" value="ECO:0000250"/>
    <property type="project" value="UniProtKB"/>
</dbReference>
<dbReference type="GO" id="GO:0140463">
    <property type="term" value="F:chromatin-protein adaptor activity"/>
    <property type="evidence" value="ECO:0000250"/>
    <property type="project" value="UniProtKB"/>
</dbReference>
<dbReference type="GO" id="GO:0000993">
    <property type="term" value="F:RNA polymerase II complex binding"/>
    <property type="evidence" value="ECO:0000250"/>
    <property type="project" value="UniProtKB"/>
</dbReference>
<dbReference type="GO" id="GO:0140870">
    <property type="term" value="F:RNA polymerase inhibitor activity"/>
    <property type="evidence" value="ECO:0000250"/>
    <property type="project" value="UniProtKB"/>
</dbReference>
<dbReference type="GO" id="GO:0016567">
    <property type="term" value="P:protein ubiquitination"/>
    <property type="evidence" value="ECO:0000250"/>
    <property type="project" value="UniProtKB"/>
</dbReference>
<dbReference type="GO" id="GO:0009411">
    <property type="term" value="P:response to UV"/>
    <property type="evidence" value="ECO:0000250"/>
    <property type="project" value="UniProtKB"/>
</dbReference>
<dbReference type="GO" id="GO:0006283">
    <property type="term" value="P:transcription-coupled nucleotide-excision repair"/>
    <property type="evidence" value="ECO:0000250"/>
    <property type="project" value="UniProtKB"/>
</dbReference>
<dbReference type="Gene3D" id="1.25.40.90">
    <property type="match status" value="1"/>
</dbReference>
<dbReference type="InterPro" id="IPR008942">
    <property type="entry name" value="ENTH_VHS"/>
</dbReference>
<dbReference type="InterPro" id="IPR018610">
    <property type="entry name" value="UVSSA"/>
</dbReference>
<dbReference type="InterPro" id="IPR049431">
    <property type="entry name" value="UVSSA_C"/>
</dbReference>
<dbReference type="InterPro" id="IPR049408">
    <property type="entry name" value="UVSSA_N_a-solenoid_rpt"/>
</dbReference>
<dbReference type="PANTHER" id="PTHR28670">
    <property type="entry name" value="UV-STIMULATED SCAFFOLD PROTEIN A"/>
    <property type="match status" value="1"/>
</dbReference>
<dbReference type="PANTHER" id="PTHR28670:SF1">
    <property type="entry name" value="UV-STIMULATED SCAFFOLD PROTEIN A"/>
    <property type="match status" value="1"/>
</dbReference>
<dbReference type="Pfam" id="PF09740">
    <property type="entry name" value="DUF2043"/>
    <property type="match status" value="1"/>
</dbReference>
<dbReference type="Pfam" id="PF20867">
    <property type="entry name" value="UVSSA_N"/>
    <property type="match status" value="1"/>
</dbReference>
<dbReference type="PROSITE" id="PS52058">
    <property type="entry name" value="ZF_UVSSA"/>
    <property type="match status" value="1"/>
</dbReference>
<accession>F7AEX0</accession>
<accession>A9JRL1</accession>
<protein>
    <recommendedName>
        <fullName>UV-stimulated scaffold protein A</fullName>
    </recommendedName>
</protein>
<evidence type="ECO:0000250" key="1">
    <source>
        <dbReference type="UniProtKB" id="Q2YD98"/>
    </source>
</evidence>
<evidence type="ECO:0000255" key="2"/>
<evidence type="ECO:0000255" key="3">
    <source>
        <dbReference type="PROSITE-ProRule" id="PRU01403"/>
    </source>
</evidence>
<evidence type="ECO:0000256" key="4">
    <source>
        <dbReference type="SAM" id="MobiDB-lite"/>
    </source>
</evidence>
<evidence type="ECO:0000305" key="5"/>
<name>UVSSA_XENTR</name>
<reference key="1">
    <citation type="journal article" date="2010" name="Science">
        <title>The genome of the Western clawed frog Xenopus tropicalis.</title>
        <authorList>
            <person name="Hellsten U."/>
            <person name="Harland R.M."/>
            <person name="Gilchrist M.J."/>
            <person name="Hendrix D."/>
            <person name="Jurka J."/>
            <person name="Kapitonov V."/>
            <person name="Ovcharenko I."/>
            <person name="Putnam N.H."/>
            <person name="Shu S."/>
            <person name="Taher L."/>
            <person name="Blitz I.L."/>
            <person name="Blumberg B."/>
            <person name="Dichmann D.S."/>
            <person name="Dubchak I."/>
            <person name="Amaya E."/>
            <person name="Detter J.C."/>
            <person name="Fletcher R."/>
            <person name="Gerhard D.S."/>
            <person name="Goodstein D."/>
            <person name="Graves T."/>
            <person name="Grigoriev I.V."/>
            <person name="Grimwood J."/>
            <person name="Kawashima T."/>
            <person name="Lindquist E."/>
            <person name="Lucas S.M."/>
            <person name="Mead P.E."/>
            <person name="Mitros T."/>
            <person name="Ogino H."/>
            <person name="Ohta Y."/>
            <person name="Poliakov A.V."/>
            <person name="Pollet N."/>
            <person name="Robert J."/>
            <person name="Salamov A."/>
            <person name="Sater A.K."/>
            <person name="Schmutz J."/>
            <person name="Terry A."/>
            <person name="Vize P.D."/>
            <person name="Warren W.C."/>
            <person name="Wells D."/>
            <person name="Wills A."/>
            <person name="Wilson R.K."/>
            <person name="Zimmerman L.B."/>
            <person name="Zorn A.M."/>
            <person name="Grainger R."/>
            <person name="Grammer T."/>
            <person name="Khokha M.K."/>
            <person name="Richardson P.M."/>
            <person name="Rokhsar D.S."/>
        </authorList>
    </citation>
    <scope>NUCLEOTIDE SEQUENCE [LARGE SCALE GENOMIC DNA]</scope>
</reference>
<reference key="2">
    <citation type="submission" date="2007-12" db="EMBL/GenBank/DDBJ databases">
        <authorList>
            <consortium name="NIH - Xenopus Gene Collection (XGC) project"/>
        </authorList>
    </citation>
    <scope>NUCLEOTIDE SEQUENCE [LARGE SCALE MRNA]</scope>
    <source>
        <tissue>Testis</tissue>
    </source>
</reference>
<gene>
    <name type="primary">uvssa</name>
</gene>
<organism>
    <name type="scientific">Xenopus tropicalis</name>
    <name type="common">Western clawed frog</name>
    <name type="synonym">Silurana tropicalis</name>
    <dbReference type="NCBI Taxonomy" id="8364"/>
    <lineage>
        <taxon>Eukaryota</taxon>
        <taxon>Metazoa</taxon>
        <taxon>Chordata</taxon>
        <taxon>Craniata</taxon>
        <taxon>Vertebrata</taxon>
        <taxon>Euteleostomi</taxon>
        <taxon>Amphibia</taxon>
        <taxon>Batrachia</taxon>
        <taxon>Anura</taxon>
        <taxon>Pipoidea</taxon>
        <taxon>Pipidae</taxon>
        <taxon>Xenopodinae</taxon>
        <taxon>Xenopus</taxon>
        <taxon>Silurana</taxon>
    </lineage>
</organism>
<comment type="function">
    <text evidence="1">Factor involved in transcription-coupled nucleotide excision repair (TC-NER), a mechanism that rapidly removes RNA polymerase II-blocking lesions from the transcribed strand of active genes. Acts as a key adapter that promotes recruitment of factors involved in TC-NER. Facilitates the ubiquitination of the elongating form of RNA polymerase II (RNA pol IIo) at DNA damage sites, thereby promoting RNA pol IIo backtracking and access by the TC-NER machinery to lesion sites. Also promotes stabilization of ERCC6/CSB by recruiting deubiquitinating enzyme USP7 to TC-NER complexes, preventing UV-induced degradation of ERCC6 by the proteasome. Mediates the recruitment of the TFIIH complex and other factors that are required for nucleotide excision repair to RNA polymerase II. Also required to inactivate stalled RNA polymerase II by blocking the access of TCEA1/TFIIS, thereby preventing reactivation of RNA polymerase II.</text>
</comment>
<comment type="subcellular location">
    <subcellularLocation>
        <location evidence="1">Chromosome</location>
    </subcellularLocation>
    <text evidence="1">Accumulates at UV DNA damage sites.</text>
</comment>
<comment type="PTM">
    <text evidence="1">Monoubiquitinated at Lys-432 in response to transcription stress; this promotes efficient transfer of TFIIH to stalled RNA polymerase II.</text>
</comment>
<comment type="similarity">
    <text evidence="5">Belongs to the UVSSA family.</text>
</comment>
<feature type="chain" id="PRO_0000417997" description="UV-stimulated scaffold protein A">
    <location>
        <begin position="1"/>
        <end position="743"/>
    </location>
</feature>
<feature type="zinc finger region" description="UVSSA-type" evidence="3">
    <location>
        <begin position="591"/>
        <end position="618"/>
    </location>
</feature>
<feature type="region of interest" description="VHS-like">
    <location>
        <begin position="2"/>
        <end position="145"/>
    </location>
</feature>
<feature type="region of interest" description="Disordered" evidence="4">
    <location>
        <begin position="221"/>
        <end position="310"/>
    </location>
</feature>
<feature type="region of interest" description="Disordered" evidence="4">
    <location>
        <begin position="413"/>
        <end position="482"/>
    </location>
</feature>
<feature type="region of interest" description="Disordered" evidence="4">
    <location>
        <begin position="500"/>
        <end position="525"/>
    </location>
</feature>
<feature type="coiled-coil region" evidence="2">
    <location>
        <begin position="147"/>
        <end position="199"/>
    </location>
</feature>
<feature type="coiled-coil region" evidence="2">
    <location>
        <begin position="380"/>
        <end position="411"/>
    </location>
</feature>
<feature type="compositionally biased region" description="Low complexity" evidence="4">
    <location>
        <begin position="226"/>
        <end position="252"/>
    </location>
</feature>
<feature type="compositionally biased region" description="Basic and acidic residues" evidence="4">
    <location>
        <begin position="283"/>
        <end position="300"/>
    </location>
</feature>
<feature type="compositionally biased region" description="Acidic residues" evidence="4">
    <location>
        <begin position="417"/>
        <end position="428"/>
    </location>
</feature>
<feature type="compositionally biased region" description="Basic and acidic residues" evidence="4">
    <location>
        <begin position="429"/>
        <end position="447"/>
    </location>
</feature>
<feature type="compositionally biased region" description="Basic and acidic residues" evidence="4">
    <location>
        <begin position="510"/>
        <end position="522"/>
    </location>
</feature>
<feature type="binding site" evidence="3">
    <location>
        <position position="594"/>
    </location>
    <ligand>
        <name>Zn(2+)</name>
        <dbReference type="ChEBI" id="CHEBI:29105"/>
    </ligand>
</feature>
<feature type="binding site" evidence="3">
    <location>
        <position position="604"/>
    </location>
    <ligand>
        <name>Zn(2+)</name>
        <dbReference type="ChEBI" id="CHEBI:29105"/>
    </ligand>
</feature>
<feature type="binding site" evidence="3">
    <location>
        <position position="612"/>
    </location>
    <ligand>
        <name>Zn(2+)</name>
        <dbReference type="ChEBI" id="CHEBI:29105"/>
    </ligand>
</feature>
<feature type="binding site" evidence="3">
    <location>
        <position position="615"/>
    </location>
    <ligand>
        <name>Zn(2+)</name>
        <dbReference type="ChEBI" id="CHEBI:29105"/>
    </ligand>
</feature>
<feature type="cross-link" description="Glycyl lysine isopeptide (Lys-Gly) (interchain with G-Cter in ubiquitin)" evidence="1">
    <location>
        <position position="432"/>
    </location>
</feature>
<feature type="sequence conflict" description="In Ref. 2; AAI55702." evidence="5" ref="2">
    <original>A</original>
    <variation>V</variation>
    <location>
        <position position="211"/>
    </location>
</feature>
<feature type="sequence conflict" description="In Ref. 2; AAI55702." evidence="5" ref="2">
    <original>K</original>
    <variation>R</variation>
    <location>
        <position position="409"/>
    </location>
</feature>
<feature type="sequence conflict" description="In Ref. 2; AAI55702." evidence="5" ref="2">
    <original>L</original>
    <variation>P</variation>
    <location>
        <position position="523"/>
    </location>
</feature>
<proteinExistence type="evidence at transcript level"/>